<reference key="1">
    <citation type="journal article" date="2008" name="J. Bacteriol.">
        <title>The complete genome sequence of Escherichia coli DH10B: insights into the biology of a laboratory workhorse.</title>
        <authorList>
            <person name="Durfee T."/>
            <person name="Nelson R."/>
            <person name="Baldwin S."/>
            <person name="Plunkett G. III"/>
            <person name="Burland V."/>
            <person name="Mau B."/>
            <person name="Petrosino J.F."/>
            <person name="Qin X."/>
            <person name="Muzny D.M."/>
            <person name="Ayele M."/>
            <person name="Gibbs R.A."/>
            <person name="Csorgo B."/>
            <person name="Posfai G."/>
            <person name="Weinstock G.M."/>
            <person name="Blattner F.R."/>
        </authorList>
    </citation>
    <scope>NUCLEOTIDE SEQUENCE [LARGE SCALE GENOMIC DNA]</scope>
    <source>
        <strain>K12 / DH10B</strain>
    </source>
</reference>
<keyword id="KW-0963">Cytoplasm</keyword>
<keyword id="KW-0489">Methyltransferase</keyword>
<keyword id="KW-0698">rRNA processing</keyword>
<keyword id="KW-0949">S-adenosyl-L-methionine</keyword>
<keyword id="KW-0808">Transferase</keyword>
<proteinExistence type="inferred from homology"/>
<feature type="chain" id="PRO_0000349907" description="Ribosomal RNA large subunit methyltransferase F">
    <location>
        <begin position="1"/>
        <end position="308"/>
    </location>
</feature>
<protein>
    <recommendedName>
        <fullName evidence="1">Ribosomal RNA large subunit methyltransferase F</fullName>
        <ecNumber evidence="1">2.1.1.181</ecNumber>
    </recommendedName>
    <alternativeName>
        <fullName evidence="1">23S rRNA mA1618 methyltransferase</fullName>
    </alternativeName>
    <alternativeName>
        <fullName evidence="1">rRNA adenine N-6-methyltransferase</fullName>
    </alternativeName>
</protein>
<comment type="function">
    <text evidence="1">Specifically methylates the adenine in position 1618 of 23S rRNA.</text>
</comment>
<comment type="catalytic activity">
    <reaction evidence="1">
        <text>adenosine(1618) in 23S rRNA + S-adenosyl-L-methionine = N(6)-methyladenosine(1618) in 23S rRNA + S-adenosyl-L-homocysteine + H(+)</text>
        <dbReference type="Rhea" id="RHEA:16497"/>
        <dbReference type="Rhea" id="RHEA-COMP:10229"/>
        <dbReference type="Rhea" id="RHEA-COMP:10231"/>
        <dbReference type="ChEBI" id="CHEBI:15378"/>
        <dbReference type="ChEBI" id="CHEBI:57856"/>
        <dbReference type="ChEBI" id="CHEBI:59789"/>
        <dbReference type="ChEBI" id="CHEBI:74411"/>
        <dbReference type="ChEBI" id="CHEBI:74449"/>
        <dbReference type="EC" id="2.1.1.181"/>
    </reaction>
</comment>
<comment type="subcellular location">
    <subcellularLocation>
        <location evidence="1">Cytoplasm</location>
    </subcellularLocation>
</comment>
<comment type="similarity">
    <text evidence="1">Belongs to the methyltransferase superfamily. METTL16/RlmF family.</text>
</comment>
<sequence>MSAQKPGLHPRNRHHSRYDLATLCQVNPELRQFLTLTPAGEQSVDFANPLAVKALNKALLAHFYAVANWDIPDGFLCPPVPGRADYIHHLADLLAEASGTIPANASILDIGVGANCIYPLIGVHEYGWRFTGSETSSQALSSAQAIISSNPGLNRAIRLRRQKESGAIFNGIIHKNEQYDATLCNPPFHDSAAAARAGSERKRRNLGLNKDDALNFGGQQQELWCEGGEVTFIKKMIEESKGFAKQVMWFTSLVSRGENLPPLYRALTDVGAVKVVKKEMAQGQKQSRFIAWTFMNDEQRRRFVNRQR</sequence>
<evidence type="ECO:0000255" key="1">
    <source>
        <dbReference type="HAMAP-Rule" id="MF_01848"/>
    </source>
</evidence>
<organism>
    <name type="scientific">Escherichia coli (strain K12 / DH10B)</name>
    <dbReference type="NCBI Taxonomy" id="316385"/>
    <lineage>
        <taxon>Bacteria</taxon>
        <taxon>Pseudomonadati</taxon>
        <taxon>Pseudomonadota</taxon>
        <taxon>Gammaproteobacteria</taxon>
        <taxon>Enterobacterales</taxon>
        <taxon>Enterobacteriaceae</taxon>
        <taxon>Escherichia</taxon>
    </lineage>
</organism>
<name>RLMF_ECODH</name>
<gene>
    <name evidence="1" type="primary">rlmF</name>
    <name type="ordered locus">ECDH10B_0875</name>
</gene>
<accession>B1X7D7</accession>
<dbReference type="EC" id="2.1.1.181" evidence="1"/>
<dbReference type="EMBL" id="CP000948">
    <property type="protein sequence ID" value="ACB02008.1"/>
    <property type="molecule type" value="Genomic_DNA"/>
</dbReference>
<dbReference type="RefSeq" id="WP_001295299.1">
    <property type="nucleotide sequence ID" value="NC_010473.1"/>
</dbReference>
<dbReference type="SMR" id="B1X7D7"/>
<dbReference type="KEGG" id="ecd:ECDH10B_0875"/>
<dbReference type="HOGENOM" id="CLU_027534_3_0_6"/>
<dbReference type="GO" id="GO:0005737">
    <property type="term" value="C:cytoplasm"/>
    <property type="evidence" value="ECO:0007669"/>
    <property type="project" value="UniProtKB-SubCell"/>
</dbReference>
<dbReference type="GO" id="GO:0052907">
    <property type="term" value="F:23S rRNA (adenine(1618)-N(6))-methyltransferase activity"/>
    <property type="evidence" value="ECO:0007669"/>
    <property type="project" value="UniProtKB-EC"/>
</dbReference>
<dbReference type="GO" id="GO:0070475">
    <property type="term" value="P:rRNA base methylation"/>
    <property type="evidence" value="ECO:0007669"/>
    <property type="project" value="TreeGrafter"/>
</dbReference>
<dbReference type="FunFam" id="3.40.50.150:FF:000045">
    <property type="entry name" value="Ribosomal RNA large subunit methyltransferase F"/>
    <property type="match status" value="1"/>
</dbReference>
<dbReference type="Gene3D" id="3.40.50.150">
    <property type="entry name" value="Vaccinia Virus protein VP39"/>
    <property type="match status" value="1"/>
</dbReference>
<dbReference type="HAMAP" id="MF_01848">
    <property type="entry name" value="23SrRNA_methyltr_F"/>
    <property type="match status" value="1"/>
</dbReference>
<dbReference type="InterPro" id="IPR010286">
    <property type="entry name" value="METTL16/RlmF"/>
</dbReference>
<dbReference type="InterPro" id="IPR016909">
    <property type="entry name" value="rRNA_lsu_MeTfrase_F"/>
</dbReference>
<dbReference type="InterPro" id="IPR029063">
    <property type="entry name" value="SAM-dependent_MTases_sf"/>
</dbReference>
<dbReference type="NCBIfam" id="NF008725">
    <property type="entry name" value="PRK11727.1"/>
    <property type="match status" value="1"/>
</dbReference>
<dbReference type="PANTHER" id="PTHR13393:SF0">
    <property type="entry name" value="RNA N6-ADENOSINE-METHYLTRANSFERASE METTL16"/>
    <property type="match status" value="1"/>
</dbReference>
<dbReference type="PANTHER" id="PTHR13393">
    <property type="entry name" value="SAM-DEPENDENT METHYLTRANSFERASE"/>
    <property type="match status" value="1"/>
</dbReference>
<dbReference type="Pfam" id="PF05971">
    <property type="entry name" value="Methyltransf_10"/>
    <property type="match status" value="1"/>
</dbReference>
<dbReference type="PIRSF" id="PIRSF029038">
    <property type="entry name" value="Mtase_YbiN_prd"/>
    <property type="match status" value="1"/>
</dbReference>
<dbReference type="SUPFAM" id="SSF53335">
    <property type="entry name" value="S-adenosyl-L-methionine-dependent methyltransferases"/>
    <property type="match status" value="1"/>
</dbReference>